<gene>
    <name type="primary">PRM1</name>
</gene>
<reference key="1">
    <citation type="submission" date="1998-10" db="EMBL/GenBank/DDBJ databases">
        <title>Positive Darwinian selection on the lineage leading to humans.</title>
        <authorList>
            <person name="Karanth P.K."/>
            <person name="Stewart C.-B."/>
            <person name="Holt R.A."/>
            <person name="de Koning J."/>
            <person name="Messier W."/>
        </authorList>
    </citation>
    <scope>NUCLEOTIDE SEQUENCE [GENOMIC DNA]</scope>
</reference>
<feature type="chain" id="PRO_0000191553" description="Sperm protamine P1">
    <location>
        <begin position="1"/>
        <end position="50"/>
    </location>
</feature>
<dbReference type="EMBL" id="AF119241">
    <property type="protein sequence ID" value="AAG42165.1"/>
    <property type="molecule type" value="Genomic_DNA"/>
</dbReference>
<dbReference type="GO" id="GO:0000786">
    <property type="term" value="C:nucleosome"/>
    <property type="evidence" value="ECO:0007669"/>
    <property type="project" value="UniProtKB-KW"/>
</dbReference>
<dbReference type="GO" id="GO:0005634">
    <property type="term" value="C:nucleus"/>
    <property type="evidence" value="ECO:0007669"/>
    <property type="project" value="UniProtKB-SubCell"/>
</dbReference>
<dbReference type="GO" id="GO:0003677">
    <property type="term" value="F:DNA binding"/>
    <property type="evidence" value="ECO:0007669"/>
    <property type="project" value="UniProtKB-KW"/>
</dbReference>
<dbReference type="GO" id="GO:0030261">
    <property type="term" value="P:chromosome condensation"/>
    <property type="evidence" value="ECO:0007669"/>
    <property type="project" value="UniProtKB-KW"/>
</dbReference>
<dbReference type="GO" id="GO:0035092">
    <property type="term" value="P:sperm DNA condensation"/>
    <property type="evidence" value="ECO:0007669"/>
    <property type="project" value="InterPro"/>
</dbReference>
<dbReference type="InterPro" id="IPR000221">
    <property type="entry name" value="Protamine_P1"/>
</dbReference>
<dbReference type="Pfam" id="PF00260">
    <property type="entry name" value="Protamine_P1"/>
    <property type="match status" value="1"/>
</dbReference>
<dbReference type="PROSITE" id="PS00048">
    <property type="entry name" value="PROTAMINE_P1"/>
    <property type="match status" value="1"/>
</dbReference>
<accession>Q9GKQ1</accession>
<organism>
    <name type="scientific">Saimiri sciureus</name>
    <name type="common">Common squirrel monkey</name>
    <dbReference type="NCBI Taxonomy" id="9521"/>
    <lineage>
        <taxon>Eukaryota</taxon>
        <taxon>Metazoa</taxon>
        <taxon>Chordata</taxon>
        <taxon>Craniata</taxon>
        <taxon>Vertebrata</taxon>
        <taxon>Euteleostomi</taxon>
        <taxon>Mammalia</taxon>
        <taxon>Eutheria</taxon>
        <taxon>Euarchontoglires</taxon>
        <taxon>Primates</taxon>
        <taxon>Haplorrhini</taxon>
        <taxon>Platyrrhini</taxon>
        <taxon>Cebidae</taxon>
        <taxon>Saimiriinae</taxon>
        <taxon>Saimiri</taxon>
    </lineage>
</organism>
<keyword id="KW-0158">Chromosome</keyword>
<keyword id="KW-0217">Developmental protein</keyword>
<keyword id="KW-0221">Differentiation</keyword>
<keyword id="KW-1015">Disulfide bond</keyword>
<keyword id="KW-0226">DNA condensation</keyword>
<keyword id="KW-0238">DNA-binding</keyword>
<keyword id="KW-0544">Nucleosome core</keyword>
<keyword id="KW-0539">Nucleus</keyword>
<keyword id="KW-0744">Spermatogenesis</keyword>
<name>HSP1_SAISC</name>
<comment type="function">
    <text>Protamines substitute for histones in the chromatin of sperm during the haploid phase of spermatogenesis. They compact sperm DNA into a highly condensed, stable and inactive complex.</text>
</comment>
<comment type="subunit">
    <text evidence="1">Cross-linked by interchain disulfide bonds around the DNA-helix.</text>
</comment>
<comment type="subcellular location">
    <subcellularLocation>
        <location evidence="1">Nucleus</location>
    </subcellularLocation>
    <subcellularLocation>
        <location evidence="1">Chromosome</location>
    </subcellularLocation>
</comment>
<comment type="tissue specificity">
    <text>Testis.</text>
</comment>
<comment type="similarity">
    <text evidence="2">Belongs to the protamine P1 family.</text>
</comment>
<sequence length="50" mass="6849">MARYRCCRSRSRSRCYRRRRRCRTRRRRCCRRRRARRCCRRRYKLRCRRY</sequence>
<proteinExistence type="evidence at transcript level"/>
<protein>
    <recommendedName>
        <fullName>Sperm protamine P1</fullName>
    </recommendedName>
</protein>
<evidence type="ECO:0000250" key="1"/>
<evidence type="ECO:0000305" key="2"/>